<feature type="chain" id="PRO_0000372225" description="Putative antiporter subunit mnhE2">
    <location>
        <begin position="1"/>
        <end position="160"/>
    </location>
</feature>
<feature type="transmembrane region" description="Helical" evidence="2">
    <location>
        <begin position="23"/>
        <end position="43"/>
    </location>
</feature>
<feature type="transmembrane region" description="Helical" evidence="2">
    <location>
        <begin position="55"/>
        <end position="75"/>
    </location>
</feature>
<feature type="transmembrane region" description="Helical" evidence="2">
    <location>
        <begin position="100"/>
        <end position="120"/>
    </location>
</feature>
<gene>
    <name type="primary">mnhE2</name>
    <name type="synonym">mrpE2</name>
    <name type="ordered locus">SERP0285</name>
</gene>
<sequence length="160" mass="18735">MKQVVLNIVIAFLWVLFQDEDEFKFTTFFAGFLIGLIVIYILHRFFGEEFYLKKIWVAIKFLAVYLYQLITSSISTINYILFKTNEVNPGLLTYETSLKSNWAITFLTILIIITPGSTVIRISKNTNKFFIHSIDVSEKDKENLLKSIKQYEDLILEVTR</sequence>
<proteinExistence type="inferred from homology"/>
<protein>
    <recommendedName>
        <fullName>Putative antiporter subunit mnhE2</fullName>
    </recommendedName>
    <alternativeName>
        <fullName>Mrp complex subunit E2</fullName>
    </alternativeName>
    <alternativeName>
        <fullName>Putative NADH-ubiquinone oxidoreductase subunit mnhE2</fullName>
    </alternativeName>
</protein>
<comment type="subunit">
    <text evidence="1">May form a heterooligomeric complex that consists of seven subunits: mnhA2, mnhB2, mnhC2, mnhD2, mnhE2, mnhF2 and mnhG2.</text>
</comment>
<comment type="subcellular location">
    <subcellularLocation>
        <location evidence="3">Cell membrane</location>
        <topology evidence="3">Multi-pass membrane protein</topology>
    </subcellularLocation>
</comment>
<comment type="similarity">
    <text evidence="3">Belongs to the CPA3 antiporters (TC 2.A.63) subunit E family.</text>
</comment>
<evidence type="ECO:0000250" key="1"/>
<evidence type="ECO:0000255" key="2"/>
<evidence type="ECO:0000305" key="3"/>
<name>MNHE2_STAEQ</name>
<keyword id="KW-0050">Antiport</keyword>
<keyword id="KW-1003">Cell membrane</keyword>
<keyword id="KW-0406">Ion transport</keyword>
<keyword id="KW-0472">Membrane</keyword>
<keyword id="KW-1185">Reference proteome</keyword>
<keyword id="KW-0812">Transmembrane</keyword>
<keyword id="KW-1133">Transmembrane helix</keyword>
<keyword id="KW-0813">Transport</keyword>
<accession>Q5HRA8</accession>
<dbReference type="EMBL" id="CP000029">
    <property type="protein sequence ID" value="AAW53736.1"/>
    <property type="molecule type" value="Genomic_DNA"/>
</dbReference>
<dbReference type="RefSeq" id="WP_001832121.1">
    <property type="nucleotide sequence ID" value="NC_002976.3"/>
</dbReference>
<dbReference type="SMR" id="Q5HRA8"/>
<dbReference type="STRING" id="176279.SERP0285"/>
<dbReference type="GeneID" id="50019442"/>
<dbReference type="KEGG" id="ser:SERP0285"/>
<dbReference type="eggNOG" id="COG1863">
    <property type="taxonomic scope" value="Bacteria"/>
</dbReference>
<dbReference type="HOGENOM" id="CLU_086615_3_2_9"/>
<dbReference type="Proteomes" id="UP000000531">
    <property type="component" value="Chromosome"/>
</dbReference>
<dbReference type="GO" id="GO:0005886">
    <property type="term" value="C:plasma membrane"/>
    <property type="evidence" value="ECO:0007669"/>
    <property type="project" value="UniProtKB-SubCell"/>
</dbReference>
<dbReference type="GO" id="GO:0015297">
    <property type="term" value="F:antiporter activity"/>
    <property type="evidence" value="ECO:0007669"/>
    <property type="project" value="UniProtKB-KW"/>
</dbReference>
<dbReference type="GO" id="GO:0008324">
    <property type="term" value="F:monoatomic cation transmembrane transporter activity"/>
    <property type="evidence" value="ECO:0007669"/>
    <property type="project" value="InterPro"/>
</dbReference>
<dbReference type="InterPro" id="IPR002758">
    <property type="entry name" value="Cation_antiport_E"/>
</dbReference>
<dbReference type="NCBIfam" id="NF006517">
    <property type="entry name" value="PRK08965.1-1"/>
    <property type="match status" value="1"/>
</dbReference>
<dbReference type="PANTHER" id="PTHR34584">
    <property type="entry name" value="NA(+)/H(+) ANTIPORTER SUBUNIT E1"/>
    <property type="match status" value="1"/>
</dbReference>
<dbReference type="PANTHER" id="PTHR34584:SF1">
    <property type="entry name" value="NA(+)_H(+) ANTIPORTER SUBUNIT E1"/>
    <property type="match status" value="1"/>
</dbReference>
<dbReference type="Pfam" id="PF01899">
    <property type="entry name" value="MNHE"/>
    <property type="match status" value="1"/>
</dbReference>
<dbReference type="PIRSF" id="PIRSF019239">
    <property type="entry name" value="MrpE"/>
    <property type="match status" value="1"/>
</dbReference>
<reference key="1">
    <citation type="journal article" date="2005" name="J. Bacteriol.">
        <title>Insights on evolution of virulence and resistance from the complete genome analysis of an early methicillin-resistant Staphylococcus aureus strain and a biofilm-producing methicillin-resistant Staphylococcus epidermidis strain.</title>
        <authorList>
            <person name="Gill S.R."/>
            <person name="Fouts D.E."/>
            <person name="Archer G.L."/>
            <person name="Mongodin E.F."/>
            <person name="DeBoy R.T."/>
            <person name="Ravel J."/>
            <person name="Paulsen I.T."/>
            <person name="Kolonay J.F."/>
            <person name="Brinkac L.M."/>
            <person name="Beanan M.J."/>
            <person name="Dodson R.J."/>
            <person name="Daugherty S.C."/>
            <person name="Madupu R."/>
            <person name="Angiuoli S.V."/>
            <person name="Durkin A.S."/>
            <person name="Haft D.H."/>
            <person name="Vamathevan J.J."/>
            <person name="Khouri H."/>
            <person name="Utterback T.R."/>
            <person name="Lee C."/>
            <person name="Dimitrov G."/>
            <person name="Jiang L."/>
            <person name="Qin H."/>
            <person name="Weidman J."/>
            <person name="Tran K."/>
            <person name="Kang K.H."/>
            <person name="Hance I.R."/>
            <person name="Nelson K.E."/>
            <person name="Fraser C.M."/>
        </authorList>
    </citation>
    <scope>NUCLEOTIDE SEQUENCE [LARGE SCALE GENOMIC DNA]</scope>
    <source>
        <strain>ATCC 35984 / DSM 28319 / BCRC 17069 / CCUG 31568 / BM 3577 / RP62A</strain>
    </source>
</reference>
<organism>
    <name type="scientific">Staphylococcus epidermidis (strain ATCC 35984 / DSM 28319 / BCRC 17069 / CCUG 31568 / BM 3577 / RP62A)</name>
    <dbReference type="NCBI Taxonomy" id="176279"/>
    <lineage>
        <taxon>Bacteria</taxon>
        <taxon>Bacillati</taxon>
        <taxon>Bacillota</taxon>
        <taxon>Bacilli</taxon>
        <taxon>Bacillales</taxon>
        <taxon>Staphylococcaceae</taxon>
        <taxon>Staphylococcus</taxon>
    </lineage>
</organism>